<reference key="1">
    <citation type="journal article" date="2001" name="Gene">
        <title>Calcium channel gamma subunits provide insights into the evolution of this gene family.</title>
        <authorList>
            <person name="Chu P.-J."/>
            <person name="Robertson H.M."/>
            <person name="Best P.M."/>
        </authorList>
    </citation>
    <scope>NUCLEOTIDE SEQUENCE [MRNA]</scope>
    <source>
        <strain>Sprague-Dawley</strain>
    </source>
</reference>
<reference key="2">
    <citation type="submission" date="2005-09" db="EMBL/GenBank/DDBJ databases">
        <authorList>
            <person name="Mural R.J."/>
            <person name="Adams M.D."/>
            <person name="Myers E.W."/>
            <person name="Smith H.O."/>
            <person name="Venter J.C."/>
        </authorList>
    </citation>
    <scope>NUCLEOTIDE SEQUENCE [LARGE SCALE GENOMIC DNA]</scope>
</reference>
<reference key="3">
    <citation type="journal article" date="2007" name="Neuron">
        <title>TARP subtypes differentially and dose-dependently control synaptic AMPA receptor gating.</title>
        <authorList>
            <person name="Milstein A.D."/>
            <person name="Zhou W."/>
            <person name="Karimzadegan S."/>
            <person name="Bredt D.S."/>
            <person name="Nicoll R.A."/>
        </authorList>
    </citation>
    <scope>FUNCTION</scope>
</reference>
<reference key="4">
    <citation type="journal article" date="2008" name="Neuron">
        <title>AMPA receptor subunit-specific regulation by a distinct family of type II TARPs.</title>
        <authorList>
            <person name="Kato A.S."/>
            <person name="Siuda E.R."/>
            <person name="Nisenbaum E.S."/>
            <person name="Bredt D.S."/>
        </authorList>
    </citation>
    <scope>FUNCTION</scope>
</reference>
<reference key="5">
    <citation type="journal article" date="2009" name="Nat. Neurosci.">
        <title>Selective regulation of long-form calcium-permeable AMPA receptors by an atypical TARP, gamma-5.</title>
        <authorList>
            <person name="Soto D."/>
            <person name="Coombs I.D."/>
            <person name="Renzi M."/>
            <person name="Zonouzi M."/>
            <person name="Farrant M."/>
            <person name="Cull-Candy S.G."/>
        </authorList>
    </citation>
    <scope>FUNCTION</scope>
</reference>
<reference key="6">
    <citation type="journal article" date="2009" name="Nat. Neurosci.">
        <authorList>
            <person name="Soto D."/>
            <person name="Coombs I.D."/>
            <person name="Renzi M."/>
            <person name="Zonouzi M."/>
            <person name="Farrant M."/>
            <person name="Cull-Candy S.G."/>
        </authorList>
    </citation>
    <scope>ERRATUM OF PUBMED:19234459</scope>
</reference>
<reference key="7">
    <citation type="journal article" date="2009" name="Science">
        <title>Functional proteomics identify cornichon proteins as auxiliary subunits of AMPA receptors.</title>
        <authorList>
            <person name="Schwenk J."/>
            <person name="Harmel N."/>
            <person name="Zolles G."/>
            <person name="Bildl W."/>
            <person name="Kulik A."/>
            <person name="Heimrich B."/>
            <person name="Chisaka O."/>
            <person name="Jonas P."/>
            <person name="Schulte U."/>
            <person name="Fakler B."/>
            <person name="Kloecker N."/>
        </authorList>
    </citation>
    <scope>FUNCTION</scope>
    <scope>SUBUNIT</scope>
    <scope>IDENTIFICATION BY MASS SPECTROMETRY</scope>
</reference>
<reference key="8">
    <citation type="journal article" date="2010" name="Proc. Natl. Acad. Sci. U.S.A.">
        <title>Functional comparison of the effects of TARPs and cornichons on AMPA receptor trafficking and gating.</title>
        <authorList>
            <person name="Shi Y."/>
            <person name="Suh Y.H."/>
            <person name="Milstein A.D."/>
            <person name="Isozaki K."/>
            <person name="Schmid S.M."/>
            <person name="Roche K.W."/>
            <person name="Nicoll R.A."/>
        </authorList>
    </citation>
    <scope>FUNCTION</scope>
    <scope>INTERACTION WITH GRIA1</scope>
</reference>
<reference key="9">
    <citation type="journal article" date="2012" name="Nat. Commun.">
        <title>Quantitative maps of protein phosphorylation sites across 14 different rat organs and tissues.</title>
        <authorList>
            <person name="Lundby A."/>
            <person name="Secher A."/>
            <person name="Lage K."/>
            <person name="Nordsborg N.B."/>
            <person name="Dmytriyev A."/>
            <person name="Lundby C."/>
            <person name="Olsen J.V."/>
        </authorList>
    </citation>
    <scope>PHOSPHORYLATION [LARGE SCALE ANALYSIS] AT SER-253</scope>
    <scope>IDENTIFICATION BY MASS SPECTROMETRY [LARGE SCALE ANALYSIS]</scope>
</reference>
<reference key="10">
    <citation type="journal article" date="2016" name="Sci. Rep.">
        <title>MPP2 is a postsynaptic MAGUK scaffold protein that links SynCAM1 cell adhesion molecules to core components of the postsynaptic density.</title>
        <authorList>
            <person name="Rademacher N."/>
            <person name="Schmerl B."/>
            <person name="Lardong J.A."/>
            <person name="Wahl M.C."/>
            <person name="Shoichet S.A."/>
        </authorList>
    </citation>
    <scope>INTERACTION WITH DLG4; GRIA2 AND MPP2</scope>
    <scope>SUBCELLULAR LOCATION</scope>
</reference>
<accession>Q71RJ2</accession>
<gene>
    <name evidence="14" type="primary">Cacng2</name>
    <name evidence="13" type="synonym">Stg</name>
</gene>
<comment type="function">
    <text evidence="6 7 8 9 10">Regulates the trafficking and gating properties of AMPA-selective glutamate receptors (AMPARs). Promotes their targeting to the cell membrane and synapses and modulates their gating properties by slowing their rates of activation, deactivation and desensitization. Does not show subunit-specific AMPA receptor regulation and regulates all AMPAR subunits. Thought to stabilize the calcium channel in an inactivated (closed) state.</text>
</comment>
<comment type="subunit">
    <text evidence="3 9 10 11">The L-type calcium channel is composed of five subunits: alpha-1, alpha-2/delta, beta and gamma. Interacts with the PDZ domains of DLG4/PSD-95 and DLG1/SAP97 (PubMed:27756895). May interact with GOPC (By similarity). Acts as an auxiliary subunit for AMPA-selective glutamate receptors (AMPARs). Found in a complex with GRIA1, GRIA2, GRIA3, GRIA4, CNIH2, CNIH3, CACNG3, CACNG4, CACNG5, CACNG7 and CACNG8. Interacts with GRIA1 and GRIA2 (PubMed:27756895). Interacts with MPP2 (PubMed:27756895).</text>
</comment>
<comment type="interaction">
    <interactant intactId="EBI-8538384">
        <id>Q71RJ2</id>
    </interactant>
    <interactant intactId="EBI-375655">
        <id>P31016</id>
        <label>Dlg4</label>
    </interactant>
    <organismsDiffer>false</organismsDiffer>
    <experiments>2</experiments>
</comment>
<comment type="interaction">
    <interactant intactId="EBI-8538384">
        <id>Q71RJ2</id>
    </interactant>
    <interactant intactId="EBI-371642">
        <id>P19490</id>
        <label>Gria1</label>
    </interactant>
    <organismsDiffer>false</organismsDiffer>
    <experiments>7</experiments>
</comment>
<comment type="interaction">
    <interactant intactId="EBI-8538384">
        <id>Q71RJ2</id>
    </interactant>
    <interactant intactId="EBI-77718">
        <id>P19491</id>
        <label>Gria2</label>
    </interactant>
    <organismsDiffer>false</organismsDiffer>
    <experiments>2</experiments>
</comment>
<comment type="subcellular location">
    <subcellularLocation>
        <location>Membrane</location>
        <topology>Multi-pass membrane protein</topology>
    </subcellularLocation>
    <subcellularLocation>
        <location evidence="11">Synapse</location>
        <location evidence="11">Synaptosome</location>
    </subcellularLocation>
</comment>
<comment type="PTM">
    <text evidence="1">Phosphorylation of Thr-321 by PKA impairs interaction with DLG1 and DLG4.</text>
</comment>
<comment type="similarity">
    <text evidence="13">Belongs to the PMP-22/EMP/MP20 family. CACNG subfamily.</text>
</comment>
<feature type="chain" id="PRO_0000408973" description="Voltage-dependent calcium channel gamma-2 subunit">
    <location>
        <begin position="1"/>
        <end position="323"/>
    </location>
</feature>
<feature type="transmembrane region" description="Helical" evidence="4">
    <location>
        <begin position="10"/>
        <end position="30"/>
    </location>
</feature>
<feature type="transmembrane region" description="Helical" evidence="4">
    <location>
        <begin position="104"/>
        <end position="124"/>
    </location>
</feature>
<feature type="transmembrane region" description="Helical" evidence="4">
    <location>
        <begin position="134"/>
        <end position="154"/>
    </location>
</feature>
<feature type="transmembrane region" description="Helical" evidence="4">
    <location>
        <begin position="182"/>
        <end position="202"/>
    </location>
</feature>
<feature type="region of interest" description="Disordered" evidence="5">
    <location>
        <begin position="233"/>
        <end position="261"/>
    </location>
</feature>
<feature type="modified residue" description="Phosphoserine" evidence="15">
    <location>
        <position position="253"/>
    </location>
</feature>
<feature type="modified residue" description="Phosphotyrosine" evidence="2">
    <location>
        <position position="271"/>
    </location>
</feature>
<feature type="modified residue" description="Phosphothreonine; by PKA" evidence="2">
    <location>
        <position position="321"/>
    </location>
</feature>
<feature type="glycosylation site" description="N-linked (GlcNAc...) asparagine" evidence="4">
    <location>
        <position position="48"/>
    </location>
</feature>
<feature type="helix" evidence="16">
    <location>
        <begin position="8"/>
        <end position="29"/>
    </location>
</feature>
<feature type="strand" evidence="16">
    <location>
        <begin position="33"/>
        <end position="38"/>
    </location>
</feature>
<feature type="strand" evidence="16">
    <location>
        <begin position="57"/>
        <end position="61"/>
    </location>
</feature>
<feature type="strand" evidence="16">
    <location>
        <begin position="63"/>
        <end position="68"/>
    </location>
</feature>
<feature type="turn" evidence="16">
    <location>
        <begin position="72"/>
        <end position="75"/>
    </location>
</feature>
<feature type="strand" evidence="17">
    <location>
        <begin position="77"/>
        <end position="79"/>
    </location>
</feature>
<feature type="helix" evidence="16">
    <location>
        <begin position="93"/>
        <end position="103"/>
    </location>
</feature>
<feature type="helix" evidence="16">
    <location>
        <begin position="106"/>
        <end position="124"/>
    </location>
</feature>
<feature type="turn" evidence="16">
    <location>
        <begin position="125"/>
        <end position="128"/>
    </location>
</feature>
<feature type="helix" evidence="16">
    <location>
        <begin position="134"/>
        <end position="160"/>
    </location>
</feature>
<feature type="strand" evidence="17">
    <location>
        <begin position="174"/>
        <end position="176"/>
    </location>
</feature>
<feature type="helix" evidence="16">
    <location>
        <begin position="178"/>
        <end position="209"/>
    </location>
</feature>
<keyword id="KW-0002">3D-structure</keyword>
<keyword id="KW-0106">Calcium</keyword>
<keyword id="KW-0107">Calcium channel</keyword>
<keyword id="KW-0109">Calcium transport</keyword>
<keyword id="KW-0325">Glycoprotein</keyword>
<keyword id="KW-0407">Ion channel</keyword>
<keyword id="KW-0406">Ion transport</keyword>
<keyword id="KW-0472">Membrane</keyword>
<keyword id="KW-0597">Phosphoprotein</keyword>
<keyword id="KW-1185">Reference proteome</keyword>
<keyword id="KW-0770">Synapse</keyword>
<keyword id="KW-0771">Synaptosome</keyword>
<keyword id="KW-0812">Transmembrane</keyword>
<keyword id="KW-1133">Transmembrane helix</keyword>
<keyword id="KW-0813">Transport</keyword>
<keyword id="KW-0851">Voltage-gated channel</keyword>
<proteinExistence type="evidence at protein level"/>
<organism>
    <name type="scientific">Rattus norvegicus</name>
    <name type="common">Rat</name>
    <dbReference type="NCBI Taxonomy" id="10116"/>
    <lineage>
        <taxon>Eukaryota</taxon>
        <taxon>Metazoa</taxon>
        <taxon>Chordata</taxon>
        <taxon>Craniata</taxon>
        <taxon>Vertebrata</taxon>
        <taxon>Euteleostomi</taxon>
        <taxon>Mammalia</taxon>
        <taxon>Eutheria</taxon>
        <taxon>Euarchontoglires</taxon>
        <taxon>Glires</taxon>
        <taxon>Rodentia</taxon>
        <taxon>Myomorpha</taxon>
        <taxon>Muroidea</taxon>
        <taxon>Muridae</taxon>
        <taxon>Murinae</taxon>
        <taxon>Rattus</taxon>
    </lineage>
</organism>
<protein>
    <recommendedName>
        <fullName>Voltage-dependent calcium channel gamma-2 subunit</fullName>
    </recommendedName>
    <alternativeName>
        <fullName>Neuronal voltage-gated calcium channel gamma-2 subunit</fullName>
    </alternativeName>
    <alternativeName>
        <fullName evidence="12">Stargazin</fullName>
    </alternativeName>
    <alternativeName>
        <fullName>Transmembrane AMPAR regulatory protein gamma-2</fullName>
        <shortName evidence="12">TARP gamma-2</shortName>
    </alternativeName>
</protein>
<dbReference type="EMBL" id="AF361339">
    <property type="protein sequence ID" value="AAL50034.1"/>
    <property type="molecule type" value="mRNA"/>
</dbReference>
<dbReference type="EMBL" id="CH473950">
    <property type="protein sequence ID" value="EDM15892.1"/>
    <property type="molecule type" value="Genomic_DNA"/>
</dbReference>
<dbReference type="RefSeq" id="NP_445803.2">
    <property type="nucleotide sequence ID" value="NM_053351.2"/>
</dbReference>
<dbReference type="PDB" id="5KK2">
    <property type="method" value="EM"/>
    <property type="resolution" value="7.30 A"/>
    <property type="chains" value="E/F/G/H=1-323"/>
</dbReference>
<dbReference type="PDB" id="5VOT">
    <property type="method" value="EM"/>
    <property type="resolution" value="4.90 A"/>
    <property type="chains" value="E/F/G/H=1-323"/>
</dbReference>
<dbReference type="PDB" id="5VOU">
    <property type="method" value="EM"/>
    <property type="resolution" value="6.40 A"/>
    <property type="chains" value="E/F/G/H=1-323"/>
</dbReference>
<dbReference type="PDB" id="5VOV">
    <property type="method" value="EM"/>
    <property type="resolution" value="7.70 A"/>
    <property type="chains" value="E/F/G/H=1-323"/>
</dbReference>
<dbReference type="PDB" id="6NJL">
    <property type="method" value="EM"/>
    <property type="resolution" value="6.70 A"/>
    <property type="chains" value="F/H=1-323"/>
</dbReference>
<dbReference type="PDB" id="6NJM">
    <property type="method" value="EM"/>
    <property type="resolution" value="6.50 A"/>
    <property type="chains" value="F/H=1-323"/>
</dbReference>
<dbReference type="PDB" id="6NJN">
    <property type="method" value="EM"/>
    <property type="resolution" value="6.50 A"/>
    <property type="chains" value="F/H=1-323"/>
</dbReference>
<dbReference type="PDB" id="7TNN">
    <property type="method" value="EM"/>
    <property type="resolution" value="3.91 A"/>
    <property type="chains" value="A/B/C/D=2-208"/>
</dbReference>
<dbReference type="PDB" id="7TNO">
    <property type="method" value="EM"/>
    <property type="resolution" value="4.02 A"/>
    <property type="chains" value="A/B/C/D=2-208"/>
</dbReference>
<dbReference type="PDB" id="8C1R">
    <property type="method" value="EM"/>
    <property type="resolution" value="3.20 A"/>
    <property type="chains" value="E/F/G/H=2-323"/>
</dbReference>
<dbReference type="PDB" id="8C1S">
    <property type="method" value="EM"/>
    <property type="resolution" value="3.00 A"/>
    <property type="chains" value="E/F/G/H=2-323"/>
</dbReference>
<dbReference type="PDB" id="8P3Q">
    <property type="method" value="EM"/>
    <property type="resolution" value="2.95 A"/>
    <property type="chains" value="E/F/G/H=1-323"/>
</dbReference>
<dbReference type="PDB" id="8P3S">
    <property type="method" value="EM"/>
    <property type="resolution" value="2.95 A"/>
    <property type="chains" value="E/F/G/H=1-323"/>
</dbReference>
<dbReference type="PDB" id="8P3X">
    <property type="method" value="EM"/>
    <property type="resolution" value="3.36 A"/>
    <property type="chains" value="E/F/G/H=1-323"/>
</dbReference>
<dbReference type="PDB" id="8P3Y">
    <property type="method" value="EM"/>
    <property type="resolution" value="3.55 A"/>
    <property type="chains" value="E/F/G/H=1-323"/>
</dbReference>
<dbReference type="PDB" id="8P3Z">
    <property type="method" value="EM"/>
    <property type="resolution" value="3.46 A"/>
    <property type="chains" value="E/F/G/H=1-323"/>
</dbReference>
<dbReference type="PDB" id="8PIV">
    <property type="method" value="EM"/>
    <property type="resolution" value="3.46 A"/>
    <property type="chains" value="E/F/G/H=1-323"/>
</dbReference>
<dbReference type="PDBsum" id="5KK2"/>
<dbReference type="PDBsum" id="5VOT"/>
<dbReference type="PDBsum" id="5VOU"/>
<dbReference type="PDBsum" id="5VOV"/>
<dbReference type="PDBsum" id="6NJL"/>
<dbReference type="PDBsum" id="6NJM"/>
<dbReference type="PDBsum" id="6NJN"/>
<dbReference type="PDBsum" id="7TNN"/>
<dbReference type="PDBsum" id="7TNO"/>
<dbReference type="PDBsum" id="8C1R"/>
<dbReference type="PDBsum" id="8C1S"/>
<dbReference type="PDBsum" id="8P3Q"/>
<dbReference type="PDBsum" id="8P3S"/>
<dbReference type="PDBsum" id="8P3X"/>
<dbReference type="PDBsum" id="8P3Y"/>
<dbReference type="PDBsum" id="8P3Z"/>
<dbReference type="PDBsum" id="8PIV"/>
<dbReference type="EMDB" id="EMD-16381"/>
<dbReference type="EMDB" id="EMD-16382"/>
<dbReference type="EMDB" id="EMD-17392"/>
<dbReference type="EMDB" id="EMD-17393"/>
<dbReference type="EMDB" id="EMD-17398"/>
<dbReference type="EMDB" id="EMD-17399"/>
<dbReference type="EMDB" id="EMD-17400"/>
<dbReference type="EMDB" id="EMD-17692"/>
<dbReference type="EMDB" id="EMD-8256"/>
<dbReference type="EMDB" id="EMD-8721"/>
<dbReference type="EMDB" id="EMD-8722"/>
<dbReference type="EMDB" id="EMD-8723"/>
<dbReference type="EMDB" id="EMD-9387"/>
<dbReference type="EMDB" id="EMD-9388"/>
<dbReference type="EMDB" id="EMD-9389"/>
<dbReference type="SMR" id="Q71RJ2"/>
<dbReference type="CORUM" id="Q71RJ2"/>
<dbReference type="DIP" id="DIP-41720N"/>
<dbReference type="FunCoup" id="Q71RJ2">
    <property type="interactions" value="1147"/>
</dbReference>
<dbReference type="IntAct" id="Q71RJ2">
    <property type="interactions" value="7"/>
</dbReference>
<dbReference type="MINT" id="Q71RJ2"/>
<dbReference type="STRING" id="10116.ENSRNOP00000008414"/>
<dbReference type="ChEMBL" id="CHEMBL4523358"/>
<dbReference type="GlyCosmos" id="Q71RJ2">
    <property type="glycosylation" value="1 site, No reported glycans"/>
</dbReference>
<dbReference type="GlyGen" id="Q71RJ2">
    <property type="glycosylation" value="1 site"/>
</dbReference>
<dbReference type="iPTMnet" id="Q71RJ2"/>
<dbReference type="PhosphoSitePlus" id="Q71RJ2"/>
<dbReference type="SwissPalm" id="Q71RJ2"/>
<dbReference type="PaxDb" id="10116-ENSRNOP00000008414"/>
<dbReference type="ABCD" id="Q71RJ2">
    <property type="antibodies" value="2 sequenced antibodies"/>
</dbReference>
<dbReference type="Ensembl" id="ENSRNOT00000106728.1">
    <property type="protein sequence ID" value="ENSRNOP00000085982.1"/>
    <property type="gene ID" value="ENSRNOG00000065511.1"/>
</dbReference>
<dbReference type="GeneID" id="84347"/>
<dbReference type="KEGG" id="rno:84347"/>
<dbReference type="UCSC" id="RGD:71095">
    <property type="organism name" value="rat"/>
</dbReference>
<dbReference type="AGR" id="RGD:71095"/>
<dbReference type="CTD" id="10369"/>
<dbReference type="RGD" id="71095">
    <property type="gene designation" value="Cacng2"/>
</dbReference>
<dbReference type="eggNOG" id="ENOG502QSNI">
    <property type="taxonomic scope" value="Eukaryota"/>
</dbReference>
<dbReference type="GeneTree" id="ENSGT01050000244893"/>
<dbReference type="HOGENOM" id="CLU_053704_0_1_1"/>
<dbReference type="InParanoid" id="Q71RJ2"/>
<dbReference type="OMA" id="PEETDYQ"/>
<dbReference type="OrthoDB" id="9990458at2759"/>
<dbReference type="PhylomeDB" id="Q71RJ2"/>
<dbReference type="TreeFam" id="TF327980"/>
<dbReference type="Reactome" id="R-RNO-112308">
    <property type="pathway name" value="Presynaptic depolarization and calcium channel opening"/>
</dbReference>
<dbReference type="Reactome" id="R-RNO-399719">
    <property type="pathway name" value="Trafficking of AMPA receptors"/>
</dbReference>
<dbReference type="Reactome" id="R-RNO-5682910">
    <property type="pathway name" value="LGI-ADAM interactions"/>
</dbReference>
<dbReference type="PRO" id="PR:Q71RJ2"/>
<dbReference type="Proteomes" id="UP000002494">
    <property type="component" value="Chromosome 7"/>
</dbReference>
<dbReference type="Proteomes" id="UP000234681">
    <property type="component" value="Chromosome 7"/>
</dbReference>
<dbReference type="Bgee" id="ENSRNOG00000006226">
    <property type="expression patterns" value="Expressed in cerebellum and 2 other cell types or tissues"/>
</dbReference>
<dbReference type="GO" id="GO:0032281">
    <property type="term" value="C:AMPA glutamate receptor complex"/>
    <property type="evidence" value="ECO:0000314"/>
    <property type="project" value="UniProtKB"/>
</dbReference>
<dbReference type="GO" id="GO:0009986">
    <property type="term" value="C:cell surface"/>
    <property type="evidence" value="ECO:0000314"/>
    <property type="project" value="RGD"/>
</dbReference>
<dbReference type="GO" id="GO:0044300">
    <property type="term" value="C:cerebellar mossy fiber"/>
    <property type="evidence" value="ECO:0000314"/>
    <property type="project" value="RGD"/>
</dbReference>
<dbReference type="GO" id="GO:0098978">
    <property type="term" value="C:glutamatergic synapse"/>
    <property type="evidence" value="ECO:0000266"/>
    <property type="project" value="RGD"/>
</dbReference>
<dbReference type="GO" id="GO:0098686">
    <property type="term" value="C:hippocampal mossy fiber to CA3 synapse"/>
    <property type="evidence" value="ECO:0000266"/>
    <property type="project" value="RGD"/>
</dbReference>
<dbReference type="GO" id="GO:0098839">
    <property type="term" value="C:postsynaptic density membrane"/>
    <property type="evidence" value="ECO:0000314"/>
    <property type="project" value="RGD"/>
</dbReference>
<dbReference type="GO" id="GO:0098685">
    <property type="term" value="C:Schaffer collateral - CA1 synapse"/>
    <property type="evidence" value="ECO:0000266"/>
    <property type="project" value="RGD"/>
</dbReference>
<dbReference type="GO" id="GO:0036477">
    <property type="term" value="C:somatodendritic compartment"/>
    <property type="evidence" value="ECO:0000266"/>
    <property type="project" value="RGD"/>
</dbReference>
<dbReference type="GO" id="GO:0005891">
    <property type="term" value="C:voltage-gated calcium channel complex"/>
    <property type="evidence" value="ECO:0007669"/>
    <property type="project" value="InterPro"/>
</dbReference>
<dbReference type="GO" id="GO:0005246">
    <property type="term" value="F:calcium channel regulator activity"/>
    <property type="evidence" value="ECO:0000303"/>
    <property type="project" value="RGD"/>
</dbReference>
<dbReference type="GO" id="GO:0016247">
    <property type="term" value="F:channel regulator activity"/>
    <property type="evidence" value="ECO:0000318"/>
    <property type="project" value="GO_Central"/>
</dbReference>
<dbReference type="GO" id="GO:0035255">
    <property type="term" value="F:ionotropic glutamate receptor binding"/>
    <property type="evidence" value="ECO:0000353"/>
    <property type="project" value="RGD"/>
</dbReference>
<dbReference type="GO" id="GO:0005245">
    <property type="term" value="F:voltage-gated calcium channel activity"/>
    <property type="evidence" value="ECO:0000266"/>
    <property type="project" value="RGD"/>
</dbReference>
<dbReference type="GO" id="GO:0060082">
    <property type="term" value="P:eye blink reflex"/>
    <property type="evidence" value="ECO:0000270"/>
    <property type="project" value="RGD"/>
</dbReference>
<dbReference type="GO" id="GO:0051899">
    <property type="term" value="P:membrane depolarization"/>
    <property type="evidence" value="ECO:0000266"/>
    <property type="project" value="RGD"/>
</dbReference>
<dbReference type="GO" id="GO:0060081">
    <property type="term" value="P:membrane hyperpolarization"/>
    <property type="evidence" value="ECO:0000266"/>
    <property type="project" value="RGD"/>
</dbReference>
<dbReference type="GO" id="GO:0050877">
    <property type="term" value="P:nervous system process"/>
    <property type="evidence" value="ECO:0000266"/>
    <property type="project" value="RGD"/>
</dbReference>
<dbReference type="GO" id="GO:0007528">
    <property type="term" value="P:neuromuscular junction development"/>
    <property type="evidence" value="ECO:0000266"/>
    <property type="project" value="RGD"/>
</dbReference>
<dbReference type="GO" id="GO:0099645">
    <property type="term" value="P:neurotransmitter receptor localization to postsynaptic specialization membrane"/>
    <property type="evidence" value="ECO:0000266"/>
    <property type="project" value="RGD"/>
</dbReference>
<dbReference type="GO" id="GO:1904510">
    <property type="term" value="P:positive regulation of protein localization to basolateral plasma membrane"/>
    <property type="evidence" value="ECO:0000314"/>
    <property type="project" value="RGD"/>
</dbReference>
<dbReference type="GO" id="GO:0051968">
    <property type="term" value="P:positive regulation of synaptic transmission, glutamatergic"/>
    <property type="evidence" value="ECO:0000318"/>
    <property type="project" value="GO_Central"/>
</dbReference>
<dbReference type="GO" id="GO:0098970">
    <property type="term" value="P:postsynaptic neurotransmitter receptor diffusion trapping"/>
    <property type="evidence" value="ECO:0000266"/>
    <property type="project" value="RGD"/>
</dbReference>
<dbReference type="GO" id="GO:0006612">
    <property type="term" value="P:protein targeting to membrane"/>
    <property type="evidence" value="ECO:0000314"/>
    <property type="project" value="RGD"/>
</dbReference>
<dbReference type="GO" id="GO:2000311">
    <property type="term" value="P:regulation of AMPA receptor activity"/>
    <property type="evidence" value="ECO:0000314"/>
    <property type="project" value="UniProtKB"/>
</dbReference>
<dbReference type="GO" id="GO:0042391">
    <property type="term" value="P:regulation of membrane potential"/>
    <property type="evidence" value="ECO:0000266"/>
    <property type="project" value="RGD"/>
</dbReference>
<dbReference type="GO" id="GO:0099072">
    <property type="term" value="P:regulation of postsynaptic membrane neurotransmitter receptor levels"/>
    <property type="evidence" value="ECO:0000266"/>
    <property type="project" value="RGD"/>
</dbReference>
<dbReference type="GO" id="GO:0051592">
    <property type="term" value="P:response to calcium ion"/>
    <property type="evidence" value="ECO:0000270"/>
    <property type="project" value="RGD"/>
</dbReference>
<dbReference type="GO" id="GO:0019226">
    <property type="term" value="P:transmission of nerve impulse"/>
    <property type="evidence" value="ECO:0000266"/>
    <property type="project" value="RGD"/>
</dbReference>
<dbReference type="FunFam" id="1.20.140.150:FF:000002">
    <property type="entry name" value="Voltage-dependent calcium channel gamma-2 subunit"/>
    <property type="match status" value="1"/>
</dbReference>
<dbReference type="Gene3D" id="1.20.140.150">
    <property type="match status" value="1"/>
</dbReference>
<dbReference type="InterPro" id="IPR051072">
    <property type="entry name" value="CACNG_subunit"/>
</dbReference>
<dbReference type="InterPro" id="IPR004031">
    <property type="entry name" value="PMP22/EMP/MP20/Claudin"/>
</dbReference>
<dbReference type="InterPro" id="IPR005422">
    <property type="entry name" value="VDCC_g2su"/>
</dbReference>
<dbReference type="InterPro" id="IPR008368">
    <property type="entry name" value="VDCC_gsu"/>
</dbReference>
<dbReference type="PANTHER" id="PTHR12107">
    <property type="entry name" value="VOLTAGE-DEPENDENT CALCIUM CHANNEL GAMMA SUBUNIT"/>
    <property type="match status" value="1"/>
</dbReference>
<dbReference type="PANTHER" id="PTHR12107:SF1">
    <property type="entry name" value="VOLTAGE-DEPENDENT CALCIUM CHANNEL GAMMA-2 SUBUNIT"/>
    <property type="match status" value="1"/>
</dbReference>
<dbReference type="Pfam" id="PF00822">
    <property type="entry name" value="PMP22_Claudin"/>
    <property type="match status" value="1"/>
</dbReference>
<dbReference type="PRINTS" id="PR01792">
    <property type="entry name" value="VDCCGAMMA"/>
</dbReference>
<dbReference type="PRINTS" id="PR01602">
    <property type="entry name" value="VDCCGAMMA2"/>
</dbReference>
<evidence type="ECO:0000250" key="1"/>
<evidence type="ECO:0000250" key="2">
    <source>
        <dbReference type="UniProtKB" id="O88602"/>
    </source>
</evidence>
<evidence type="ECO:0000250" key="3">
    <source>
        <dbReference type="UniProtKB" id="Q9Y698"/>
    </source>
</evidence>
<evidence type="ECO:0000255" key="4"/>
<evidence type="ECO:0000256" key="5">
    <source>
        <dbReference type="SAM" id="MobiDB-lite"/>
    </source>
</evidence>
<evidence type="ECO:0000269" key="6">
    <source>
    </source>
</evidence>
<evidence type="ECO:0000269" key="7">
    <source>
    </source>
</evidence>
<evidence type="ECO:0000269" key="8">
    <source>
    </source>
</evidence>
<evidence type="ECO:0000269" key="9">
    <source>
    </source>
</evidence>
<evidence type="ECO:0000269" key="10">
    <source>
    </source>
</evidence>
<evidence type="ECO:0000269" key="11">
    <source>
    </source>
</evidence>
<evidence type="ECO:0000303" key="12">
    <source>
    </source>
</evidence>
<evidence type="ECO:0000305" key="13"/>
<evidence type="ECO:0000312" key="14">
    <source>
        <dbReference type="RGD" id="71095"/>
    </source>
</evidence>
<evidence type="ECO:0007744" key="15">
    <source>
    </source>
</evidence>
<evidence type="ECO:0007829" key="16">
    <source>
        <dbReference type="PDB" id="8P3Q"/>
    </source>
</evidence>
<evidence type="ECO:0007829" key="17">
    <source>
        <dbReference type="PDB" id="8P3Z"/>
    </source>
</evidence>
<sequence length="323" mass="35895">MGLFDRGVQMLLTTVGAFAAFSLMTIAVGTDYWLYSRGVCKTKSVSENETSKKNEEVMTHSGLWRTCCLEGNFKGLCKQIDHFPEDADYEADTAEYFLRAVRASSIFPILSVILLFMGGLCIAASEFYKTRHNIILSAGIFFVSAGLSNIIGIIVYISANAGDPSKSDSKKNSYSYGWSFYFGALSFIIAEMVGVLAVHMFIDRHKQLRATARATDYLQASAITRIPSYRYRYQRRSRSSSRSTEPSHSRDASPVGVKGFNTLPSTEISMYTLSRDPLKAATTPTATYNSDRDNSFLQVHNCIQKDSKDSLHANTANRRTTPV</sequence>
<name>CCG2_RAT</name>